<reference key="1">
    <citation type="submission" date="2007-10" db="EMBL/GenBank/DDBJ databases">
        <title>Genome sequence of Campylobacter concisus 13826 isolated from human feces.</title>
        <authorList>
            <person name="Fouts D.E."/>
            <person name="Mongodin E.F."/>
            <person name="Puiu D."/>
            <person name="Sebastian Y."/>
            <person name="Miller W.G."/>
            <person name="Mandrell R.E."/>
            <person name="On S."/>
            <person name="Nelson K.E."/>
        </authorList>
    </citation>
    <scope>NUCLEOTIDE SEQUENCE [LARGE SCALE GENOMIC DNA]</scope>
    <source>
        <strain>13826</strain>
    </source>
</reference>
<protein>
    <recommendedName>
        <fullName evidence="1">Small ribosomal subunit protein uS13</fullName>
    </recommendedName>
    <alternativeName>
        <fullName evidence="3">30S ribosomal protein S13</fullName>
    </alternativeName>
</protein>
<evidence type="ECO:0000255" key="1">
    <source>
        <dbReference type="HAMAP-Rule" id="MF_01315"/>
    </source>
</evidence>
<evidence type="ECO:0000256" key="2">
    <source>
        <dbReference type="SAM" id="MobiDB-lite"/>
    </source>
</evidence>
<evidence type="ECO:0000305" key="3"/>
<feature type="chain" id="PRO_1000051873" description="Small ribosomal subunit protein uS13">
    <location>
        <begin position="1"/>
        <end position="122"/>
    </location>
</feature>
<feature type="region of interest" description="Disordered" evidence="2">
    <location>
        <begin position="95"/>
        <end position="122"/>
    </location>
</feature>
<feature type="compositionally biased region" description="Basic residues" evidence="2">
    <location>
        <begin position="95"/>
        <end position="116"/>
    </location>
</feature>
<name>RS13_CAMC1</name>
<organism>
    <name type="scientific">Campylobacter concisus (strain 13826)</name>
    <dbReference type="NCBI Taxonomy" id="360104"/>
    <lineage>
        <taxon>Bacteria</taxon>
        <taxon>Pseudomonadati</taxon>
        <taxon>Campylobacterota</taxon>
        <taxon>Epsilonproteobacteria</taxon>
        <taxon>Campylobacterales</taxon>
        <taxon>Campylobacteraceae</taxon>
        <taxon>Campylobacter</taxon>
    </lineage>
</organism>
<sequence length="122" mass="13799">MARIAGVDLPNKKRIEYGLTYIYGIGLYKSRQILDAAGISYDKRVYELSEDEAAAIRKEIQEHHVVEGDLRKQVAMDIKALMDLGSYRGLRHRKGLPVRGQKTKTNARTRKGRRKTVGAATK</sequence>
<accession>A7ZFZ0</accession>
<keyword id="KW-0687">Ribonucleoprotein</keyword>
<keyword id="KW-0689">Ribosomal protein</keyword>
<keyword id="KW-0694">RNA-binding</keyword>
<keyword id="KW-0699">rRNA-binding</keyword>
<keyword id="KW-0820">tRNA-binding</keyword>
<gene>
    <name evidence="1" type="primary">rpsM</name>
    <name type="ordered locus">Ccon26_18630</name>
    <name type="ORF">CCC13826_1754</name>
</gene>
<comment type="function">
    <text evidence="1">Located at the top of the head of the 30S subunit, it contacts several helices of the 16S rRNA. In the 70S ribosome it contacts the 23S rRNA (bridge B1a) and protein L5 of the 50S subunit (bridge B1b), connecting the 2 subunits; these bridges are implicated in subunit movement. Contacts the tRNAs in the A and P-sites.</text>
</comment>
<comment type="subunit">
    <text evidence="1">Part of the 30S ribosomal subunit. Forms a loose heterodimer with protein S19. Forms two bridges to the 50S subunit in the 70S ribosome.</text>
</comment>
<comment type="similarity">
    <text evidence="1">Belongs to the universal ribosomal protein uS13 family.</text>
</comment>
<dbReference type="EMBL" id="CP000792">
    <property type="protein sequence ID" value="EAT98165.1"/>
    <property type="molecule type" value="Genomic_DNA"/>
</dbReference>
<dbReference type="RefSeq" id="WP_012140556.1">
    <property type="nucleotide sequence ID" value="NC_009802.2"/>
</dbReference>
<dbReference type="SMR" id="A7ZFZ0"/>
<dbReference type="STRING" id="360104.CCC13826_1754"/>
<dbReference type="GeneID" id="28663413"/>
<dbReference type="KEGG" id="cco:CCC13826_1754"/>
<dbReference type="eggNOG" id="COG0099">
    <property type="taxonomic scope" value="Bacteria"/>
</dbReference>
<dbReference type="HOGENOM" id="CLU_103849_1_2_7"/>
<dbReference type="OrthoDB" id="9803610at2"/>
<dbReference type="Proteomes" id="UP000001121">
    <property type="component" value="Chromosome"/>
</dbReference>
<dbReference type="GO" id="GO:0005829">
    <property type="term" value="C:cytosol"/>
    <property type="evidence" value="ECO:0007669"/>
    <property type="project" value="TreeGrafter"/>
</dbReference>
<dbReference type="GO" id="GO:0015935">
    <property type="term" value="C:small ribosomal subunit"/>
    <property type="evidence" value="ECO:0007669"/>
    <property type="project" value="TreeGrafter"/>
</dbReference>
<dbReference type="GO" id="GO:0019843">
    <property type="term" value="F:rRNA binding"/>
    <property type="evidence" value="ECO:0007669"/>
    <property type="project" value="UniProtKB-UniRule"/>
</dbReference>
<dbReference type="GO" id="GO:0003735">
    <property type="term" value="F:structural constituent of ribosome"/>
    <property type="evidence" value="ECO:0007669"/>
    <property type="project" value="InterPro"/>
</dbReference>
<dbReference type="GO" id="GO:0000049">
    <property type="term" value="F:tRNA binding"/>
    <property type="evidence" value="ECO:0007669"/>
    <property type="project" value="UniProtKB-UniRule"/>
</dbReference>
<dbReference type="GO" id="GO:0006412">
    <property type="term" value="P:translation"/>
    <property type="evidence" value="ECO:0007669"/>
    <property type="project" value="UniProtKB-UniRule"/>
</dbReference>
<dbReference type="FunFam" id="1.10.8.50:FF:000001">
    <property type="entry name" value="30S ribosomal protein S13"/>
    <property type="match status" value="1"/>
</dbReference>
<dbReference type="FunFam" id="4.10.910.10:FF:000001">
    <property type="entry name" value="30S ribosomal protein S13"/>
    <property type="match status" value="1"/>
</dbReference>
<dbReference type="Gene3D" id="1.10.8.50">
    <property type="match status" value="1"/>
</dbReference>
<dbReference type="Gene3D" id="4.10.910.10">
    <property type="entry name" value="30s ribosomal protein s13, domain 2"/>
    <property type="match status" value="1"/>
</dbReference>
<dbReference type="HAMAP" id="MF_01315">
    <property type="entry name" value="Ribosomal_uS13"/>
    <property type="match status" value="1"/>
</dbReference>
<dbReference type="InterPro" id="IPR027437">
    <property type="entry name" value="Rbsml_uS13_C"/>
</dbReference>
<dbReference type="InterPro" id="IPR001892">
    <property type="entry name" value="Ribosomal_uS13"/>
</dbReference>
<dbReference type="InterPro" id="IPR010979">
    <property type="entry name" value="Ribosomal_uS13-like_H2TH"/>
</dbReference>
<dbReference type="InterPro" id="IPR019980">
    <property type="entry name" value="Ribosomal_uS13_bac-type"/>
</dbReference>
<dbReference type="InterPro" id="IPR018269">
    <property type="entry name" value="Ribosomal_uS13_CS"/>
</dbReference>
<dbReference type="NCBIfam" id="TIGR03631">
    <property type="entry name" value="uS13_bact"/>
    <property type="match status" value="1"/>
</dbReference>
<dbReference type="PANTHER" id="PTHR10871">
    <property type="entry name" value="30S RIBOSOMAL PROTEIN S13/40S RIBOSOMAL PROTEIN S18"/>
    <property type="match status" value="1"/>
</dbReference>
<dbReference type="PANTHER" id="PTHR10871:SF1">
    <property type="entry name" value="SMALL RIBOSOMAL SUBUNIT PROTEIN US13M"/>
    <property type="match status" value="1"/>
</dbReference>
<dbReference type="Pfam" id="PF00416">
    <property type="entry name" value="Ribosomal_S13"/>
    <property type="match status" value="1"/>
</dbReference>
<dbReference type="PIRSF" id="PIRSF002134">
    <property type="entry name" value="Ribosomal_S13"/>
    <property type="match status" value="1"/>
</dbReference>
<dbReference type="SUPFAM" id="SSF46946">
    <property type="entry name" value="S13-like H2TH domain"/>
    <property type="match status" value="1"/>
</dbReference>
<dbReference type="PROSITE" id="PS00646">
    <property type="entry name" value="RIBOSOMAL_S13_1"/>
    <property type="match status" value="1"/>
</dbReference>
<dbReference type="PROSITE" id="PS50159">
    <property type="entry name" value="RIBOSOMAL_S13_2"/>
    <property type="match status" value="1"/>
</dbReference>
<proteinExistence type="inferred from homology"/>